<gene>
    <name evidence="1" type="primary">sufE</name>
    <name type="ordered locus">SeHA_C1506</name>
</gene>
<feature type="chain" id="PRO_1000188334" description="Cysteine desulfuration protein SufE">
    <location>
        <begin position="1"/>
        <end position="138"/>
    </location>
</feature>
<feature type="active site" description="Cysteine persulfide intermediate" evidence="1">
    <location>
        <position position="51"/>
    </location>
</feature>
<sequence>MAALPDKEKLLRNFTRCANWEEKYLYIIELGQRLAELNPQDRNPQNTIHGCQSQVWIVMRRNANGIIELQGDSDAAIVKGLMAVVFILYHQMTAQDIVHFDVRPWFEKMALAQHLTPSRSQGLEAMIRAIRAKAATLS</sequence>
<dbReference type="EMBL" id="CP001120">
    <property type="protein sequence ID" value="ACF66078.1"/>
    <property type="molecule type" value="Genomic_DNA"/>
</dbReference>
<dbReference type="RefSeq" id="WP_000729468.1">
    <property type="nucleotide sequence ID" value="NC_011083.1"/>
</dbReference>
<dbReference type="SMR" id="B4TGL0"/>
<dbReference type="KEGG" id="seh:SeHA_C1506"/>
<dbReference type="HOGENOM" id="CLU_124502_1_1_6"/>
<dbReference type="UniPathway" id="UPA00266"/>
<dbReference type="Proteomes" id="UP000001866">
    <property type="component" value="Chromosome"/>
</dbReference>
<dbReference type="GO" id="GO:0005737">
    <property type="term" value="C:cytoplasm"/>
    <property type="evidence" value="ECO:0007669"/>
    <property type="project" value="UniProtKB-SubCell"/>
</dbReference>
<dbReference type="GO" id="GO:0016226">
    <property type="term" value="P:iron-sulfur cluster assembly"/>
    <property type="evidence" value="ECO:0007669"/>
    <property type="project" value="InterPro"/>
</dbReference>
<dbReference type="GO" id="GO:0006790">
    <property type="term" value="P:sulfur compound metabolic process"/>
    <property type="evidence" value="ECO:0007669"/>
    <property type="project" value="InterPro"/>
</dbReference>
<dbReference type="Gene3D" id="3.90.1010.10">
    <property type="match status" value="1"/>
</dbReference>
<dbReference type="HAMAP" id="MF_01832">
    <property type="entry name" value="SufE"/>
    <property type="match status" value="1"/>
</dbReference>
<dbReference type="InterPro" id="IPR023939">
    <property type="entry name" value="Cysteine_desulfuration_SufE"/>
</dbReference>
<dbReference type="InterPro" id="IPR003808">
    <property type="entry name" value="Fe-S_metab-assoc_dom"/>
</dbReference>
<dbReference type="NCBIfam" id="NF006792">
    <property type="entry name" value="PRK09296.1"/>
    <property type="match status" value="1"/>
</dbReference>
<dbReference type="PANTHER" id="PTHR43597:SF3">
    <property type="entry name" value="CYSTEINE DESULFURATION PROTEIN SUFE"/>
    <property type="match status" value="1"/>
</dbReference>
<dbReference type="PANTHER" id="PTHR43597">
    <property type="entry name" value="SULFUR ACCEPTOR PROTEIN CSDE"/>
    <property type="match status" value="1"/>
</dbReference>
<dbReference type="Pfam" id="PF02657">
    <property type="entry name" value="SufE"/>
    <property type="match status" value="1"/>
</dbReference>
<dbReference type="SUPFAM" id="SSF82649">
    <property type="entry name" value="SufE/NifU"/>
    <property type="match status" value="1"/>
</dbReference>
<organism>
    <name type="scientific">Salmonella heidelberg (strain SL476)</name>
    <dbReference type="NCBI Taxonomy" id="454169"/>
    <lineage>
        <taxon>Bacteria</taxon>
        <taxon>Pseudomonadati</taxon>
        <taxon>Pseudomonadota</taxon>
        <taxon>Gammaproteobacteria</taxon>
        <taxon>Enterobacterales</taxon>
        <taxon>Enterobacteriaceae</taxon>
        <taxon>Salmonella</taxon>
    </lineage>
</organism>
<name>SUFE_SALHS</name>
<proteinExistence type="inferred from homology"/>
<evidence type="ECO:0000255" key="1">
    <source>
        <dbReference type="HAMAP-Rule" id="MF_01832"/>
    </source>
</evidence>
<accession>B4TGL0</accession>
<protein>
    <recommendedName>
        <fullName evidence="1">Cysteine desulfuration protein SufE</fullName>
    </recommendedName>
</protein>
<comment type="function">
    <text evidence="1">Participates in cysteine desulfuration mediated by SufS. Cysteine desulfuration mobilizes sulfur from L-cysteine to yield L-alanine and constitutes an essential step in sulfur metabolism for biosynthesis of a variety of sulfur-containing biomolecules. Functions as a sulfur acceptor for SufS, by mediating the direct transfer of the sulfur atom from the S-sulfanylcysteine of SufS, an intermediate product of cysteine desulfuration process.</text>
</comment>
<comment type="pathway">
    <text evidence="1">Cofactor biosynthesis; iron-sulfur cluster biosynthesis.</text>
</comment>
<comment type="subunit">
    <text evidence="1">Homodimer. Interacts with SufS.</text>
</comment>
<comment type="subcellular location">
    <subcellularLocation>
        <location evidence="1">Cytoplasm</location>
    </subcellularLocation>
</comment>
<comment type="similarity">
    <text evidence="1">Belongs to the SufE family.</text>
</comment>
<reference key="1">
    <citation type="journal article" date="2011" name="J. Bacteriol.">
        <title>Comparative genomics of 28 Salmonella enterica isolates: evidence for CRISPR-mediated adaptive sublineage evolution.</title>
        <authorList>
            <person name="Fricke W.F."/>
            <person name="Mammel M.K."/>
            <person name="McDermott P.F."/>
            <person name="Tartera C."/>
            <person name="White D.G."/>
            <person name="Leclerc J.E."/>
            <person name="Ravel J."/>
            <person name="Cebula T.A."/>
        </authorList>
    </citation>
    <scope>NUCLEOTIDE SEQUENCE [LARGE SCALE GENOMIC DNA]</scope>
    <source>
        <strain>SL476</strain>
    </source>
</reference>
<keyword id="KW-0963">Cytoplasm</keyword>